<proteinExistence type="evidence at protein level"/>
<protein>
    <recommendedName>
        <fullName evidence="1">Glucose-6-phosphate isomerase</fullName>
        <shortName evidence="1">GPI</shortName>
        <ecNumber evidence="1">5.3.1.9</ecNumber>
    </recommendedName>
    <alternativeName>
        <fullName evidence="1">Phosphoglucose isomerase</fullName>
        <shortName evidence="1">PGI</shortName>
    </alternativeName>
    <alternativeName>
        <fullName evidence="1">Phosphohexose isomerase</fullName>
        <shortName evidence="1">PHI</shortName>
    </alternativeName>
</protein>
<keyword id="KW-0963">Cytoplasm</keyword>
<keyword id="KW-0312">Gluconeogenesis</keyword>
<keyword id="KW-0324">Glycolysis</keyword>
<keyword id="KW-0413">Isomerase</keyword>
<keyword id="KW-1185">Reference proteome</keyword>
<comment type="function">
    <text evidence="1">Catalyzes the reversible isomerization of glucose-6-phosphate to fructose-6-phosphate.</text>
</comment>
<comment type="catalytic activity">
    <reaction evidence="1">
        <text>alpha-D-glucose 6-phosphate = beta-D-fructose 6-phosphate</text>
        <dbReference type="Rhea" id="RHEA:11816"/>
        <dbReference type="ChEBI" id="CHEBI:57634"/>
        <dbReference type="ChEBI" id="CHEBI:58225"/>
        <dbReference type="EC" id="5.3.1.9"/>
    </reaction>
</comment>
<comment type="pathway">
    <text evidence="1">Carbohydrate biosynthesis; gluconeogenesis.</text>
</comment>
<comment type="pathway">
    <text evidence="1">Carbohydrate degradation; glycolysis; D-glyceraldehyde 3-phosphate and glycerone phosphate from D-glucose: step 2/4.</text>
</comment>
<comment type="subcellular location">
    <subcellularLocation>
        <location evidence="1">Cytoplasm</location>
    </subcellularLocation>
</comment>
<comment type="similarity">
    <text evidence="1">Belongs to the GPI family.</text>
</comment>
<gene>
    <name evidence="1" type="primary">pgi</name>
    <name type="ordered locus">MSMEG_5541</name>
    <name type="ordered locus">MSMEI_5387</name>
</gene>
<sequence length="549" mass="59630">MSADITETPAWQALSDHHAEIGDRHLTELFADDPARGTELALTVGDLYIDYSKHRVTRRTLDLLVDLARAAGLEERRDAMFAGEHINTSEDRAVLHTALRLPRDAKLVVDGQDVVADVHDVLDRMGDFTDRLRSGEWTGATGERITTVVNIGIGGSDLGPVMVYDALRHYADAGISARFVSNVDPADLVAKLDGLEPAKTLFIVASKTFSTLETLTNATAARRWLTDALGDAAVAKHFVAVSTNKKLVDEFGINTDNMFGFWDWVGGRYSVDSAIGLSVMAVIGKERFAEFLAGFHIVDEHFRTAPLHQNAPALLGLIGLWYSNFFGAQSRAVLPYSNDLSRFAAYLQQLTMESNGKSVRADGTPVSTDTGEIFWGEPGTNGQHAFYQLLHQGTRLVPADFIGFSQPTDDLPTADGTGSMHDLLMSNFFAQTQVLAFGKTADAIASEGTPADVVPHKVMPGNRPTTSILATKLTPSVVGQLIALYEHQVFTEGVIWGIDSFDQWGVELGKTQAKALLPVLTGDKSPAAQSDTSTDALVRRYRTERGRPA</sequence>
<organism>
    <name type="scientific">Mycolicibacterium smegmatis (strain ATCC 700084 / mc(2)155)</name>
    <name type="common">Mycobacterium smegmatis</name>
    <dbReference type="NCBI Taxonomy" id="246196"/>
    <lineage>
        <taxon>Bacteria</taxon>
        <taxon>Bacillati</taxon>
        <taxon>Actinomycetota</taxon>
        <taxon>Actinomycetes</taxon>
        <taxon>Mycobacteriales</taxon>
        <taxon>Mycobacteriaceae</taxon>
        <taxon>Mycolicibacterium</taxon>
    </lineage>
</organism>
<name>G6PI_MYCS2</name>
<evidence type="ECO:0000255" key="1">
    <source>
        <dbReference type="HAMAP-Rule" id="MF_00473"/>
    </source>
</evidence>
<accession>A0R3N9</accession>
<accession>I7FSK4</accession>
<reference key="1">
    <citation type="submission" date="2006-10" db="EMBL/GenBank/DDBJ databases">
        <authorList>
            <person name="Fleischmann R.D."/>
            <person name="Dodson R.J."/>
            <person name="Haft D.H."/>
            <person name="Merkel J.S."/>
            <person name="Nelson W.C."/>
            <person name="Fraser C.M."/>
        </authorList>
    </citation>
    <scope>NUCLEOTIDE SEQUENCE [LARGE SCALE GENOMIC DNA]</scope>
    <source>
        <strain>ATCC 700084 / mc(2)155</strain>
    </source>
</reference>
<reference key="2">
    <citation type="journal article" date="2007" name="Genome Biol.">
        <title>Interrupted coding sequences in Mycobacterium smegmatis: authentic mutations or sequencing errors?</title>
        <authorList>
            <person name="Deshayes C."/>
            <person name="Perrodou E."/>
            <person name="Gallien S."/>
            <person name="Euphrasie D."/>
            <person name="Schaeffer C."/>
            <person name="Van-Dorsselaer A."/>
            <person name="Poch O."/>
            <person name="Lecompte O."/>
            <person name="Reyrat J.-M."/>
        </authorList>
    </citation>
    <scope>NUCLEOTIDE SEQUENCE [LARGE SCALE GENOMIC DNA]</scope>
    <source>
        <strain>ATCC 700084 / mc(2)155</strain>
    </source>
</reference>
<reference key="3">
    <citation type="journal article" date="2009" name="Genome Res.">
        <title>Ortho-proteogenomics: multiple proteomes investigation through orthology and a new MS-based protocol.</title>
        <authorList>
            <person name="Gallien S."/>
            <person name="Perrodou E."/>
            <person name="Carapito C."/>
            <person name="Deshayes C."/>
            <person name="Reyrat J.-M."/>
            <person name="Van Dorsselaer A."/>
            <person name="Poch O."/>
            <person name="Schaeffer C."/>
            <person name="Lecompte O."/>
        </authorList>
    </citation>
    <scope>NUCLEOTIDE SEQUENCE [LARGE SCALE GENOMIC DNA]</scope>
    <scope>IDENTIFICATION BY MASS SPECTROMETRY [LARGE SCALE ANALYSIS]</scope>
    <source>
        <strain>ATCC 700084 / mc(2)155</strain>
    </source>
</reference>
<dbReference type="EC" id="5.3.1.9" evidence="1"/>
<dbReference type="EMBL" id="CP000480">
    <property type="protein sequence ID" value="ABK73757.1"/>
    <property type="molecule type" value="Genomic_DNA"/>
</dbReference>
<dbReference type="EMBL" id="CP001663">
    <property type="protein sequence ID" value="AFP41828.1"/>
    <property type="molecule type" value="Genomic_DNA"/>
</dbReference>
<dbReference type="RefSeq" id="WP_011730607.1">
    <property type="nucleotide sequence ID" value="NZ_SIJM01000006.1"/>
</dbReference>
<dbReference type="RefSeq" id="YP_889777.1">
    <property type="nucleotide sequence ID" value="NC_008596.1"/>
</dbReference>
<dbReference type="SMR" id="A0R3N9"/>
<dbReference type="STRING" id="246196.MSMEG_5541"/>
<dbReference type="PaxDb" id="246196-MSMEI_5387"/>
<dbReference type="GeneID" id="93460186"/>
<dbReference type="KEGG" id="msb:LJ00_27385"/>
<dbReference type="KEGG" id="msg:MSMEI_5387"/>
<dbReference type="KEGG" id="msm:MSMEG_5541"/>
<dbReference type="PATRIC" id="fig|246196.19.peg.5399"/>
<dbReference type="eggNOG" id="COG0166">
    <property type="taxonomic scope" value="Bacteria"/>
</dbReference>
<dbReference type="OrthoDB" id="140919at2"/>
<dbReference type="UniPathway" id="UPA00109">
    <property type="reaction ID" value="UER00181"/>
</dbReference>
<dbReference type="UniPathway" id="UPA00138"/>
<dbReference type="Proteomes" id="UP000000757">
    <property type="component" value="Chromosome"/>
</dbReference>
<dbReference type="Proteomes" id="UP000006158">
    <property type="component" value="Chromosome"/>
</dbReference>
<dbReference type="GO" id="GO:0005829">
    <property type="term" value="C:cytosol"/>
    <property type="evidence" value="ECO:0007669"/>
    <property type="project" value="TreeGrafter"/>
</dbReference>
<dbReference type="GO" id="GO:0097367">
    <property type="term" value="F:carbohydrate derivative binding"/>
    <property type="evidence" value="ECO:0007669"/>
    <property type="project" value="InterPro"/>
</dbReference>
<dbReference type="GO" id="GO:0004347">
    <property type="term" value="F:glucose-6-phosphate isomerase activity"/>
    <property type="evidence" value="ECO:0007669"/>
    <property type="project" value="UniProtKB-UniRule"/>
</dbReference>
<dbReference type="GO" id="GO:0048029">
    <property type="term" value="F:monosaccharide binding"/>
    <property type="evidence" value="ECO:0007669"/>
    <property type="project" value="TreeGrafter"/>
</dbReference>
<dbReference type="GO" id="GO:0006094">
    <property type="term" value="P:gluconeogenesis"/>
    <property type="evidence" value="ECO:0007669"/>
    <property type="project" value="UniProtKB-UniRule"/>
</dbReference>
<dbReference type="GO" id="GO:0051156">
    <property type="term" value="P:glucose 6-phosphate metabolic process"/>
    <property type="evidence" value="ECO:0007669"/>
    <property type="project" value="TreeGrafter"/>
</dbReference>
<dbReference type="GO" id="GO:0006096">
    <property type="term" value="P:glycolytic process"/>
    <property type="evidence" value="ECO:0007669"/>
    <property type="project" value="UniProtKB-UniRule"/>
</dbReference>
<dbReference type="CDD" id="cd05015">
    <property type="entry name" value="SIS_PGI_1"/>
    <property type="match status" value="1"/>
</dbReference>
<dbReference type="CDD" id="cd05016">
    <property type="entry name" value="SIS_PGI_2"/>
    <property type="match status" value="1"/>
</dbReference>
<dbReference type="FunFam" id="3.40.50.10490:FF:000018">
    <property type="entry name" value="Glucose-6-phosphate isomerase"/>
    <property type="match status" value="1"/>
</dbReference>
<dbReference type="Gene3D" id="1.10.1390.10">
    <property type="match status" value="1"/>
</dbReference>
<dbReference type="Gene3D" id="3.40.50.10490">
    <property type="entry name" value="Glucose-6-phosphate isomerase like protein, domain 1"/>
    <property type="match status" value="2"/>
</dbReference>
<dbReference type="HAMAP" id="MF_00473">
    <property type="entry name" value="G6P_isomerase"/>
    <property type="match status" value="1"/>
</dbReference>
<dbReference type="InterPro" id="IPR001672">
    <property type="entry name" value="G6P_Isomerase"/>
</dbReference>
<dbReference type="InterPro" id="IPR023096">
    <property type="entry name" value="G6P_Isomerase_C"/>
</dbReference>
<dbReference type="InterPro" id="IPR018189">
    <property type="entry name" value="Phosphoglucose_isomerase_CS"/>
</dbReference>
<dbReference type="InterPro" id="IPR046348">
    <property type="entry name" value="SIS_dom_sf"/>
</dbReference>
<dbReference type="InterPro" id="IPR035476">
    <property type="entry name" value="SIS_PGI_1"/>
</dbReference>
<dbReference type="InterPro" id="IPR035482">
    <property type="entry name" value="SIS_PGI_2"/>
</dbReference>
<dbReference type="NCBIfam" id="NF001211">
    <property type="entry name" value="PRK00179.1"/>
    <property type="match status" value="1"/>
</dbReference>
<dbReference type="PANTHER" id="PTHR11469">
    <property type="entry name" value="GLUCOSE-6-PHOSPHATE ISOMERASE"/>
    <property type="match status" value="1"/>
</dbReference>
<dbReference type="PANTHER" id="PTHR11469:SF1">
    <property type="entry name" value="GLUCOSE-6-PHOSPHATE ISOMERASE"/>
    <property type="match status" value="1"/>
</dbReference>
<dbReference type="Pfam" id="PF00342">
    <property type="entry name" value="PGI"/>
    <property type="match status" value="1"/>
</dbReference>
<dbReference type="PRINTS" id="PR00662">
    <property type="entry name" value="G6PISOMERASE"/>
</dbReference>
<dbReference type="SUPFAM" id="SSF53697">
    <property type="entry name" value="SIS domain"/>
    <property type="match status" value="1"/>
</dbReference>
<dbReference type="PROSITE" id="PS00765">
    <property type="entry name" value="P_GLUCOSE_ISOMERASE_1"/>
    <property type="match status" value="1"/>
</dbReference>
<dbReference type="PROSITE" id="PS00174">
    <property type="entry name" value="P_GLUCOSE_ISOMERASE_2"/>
    <property type="match status" value="1"/>
</dbReference>
<dbReference type="PROSITE" id="PS51463">
    <property type="entry name" value="P_GLUCOSE_ISOMERASE_3"/>
    <property type="match status" value="1"/>
</dbReference>
<feature type="chain" id="PRO_1000013989" description="Glucose-6-phosphate isomerase">
    <location>
        <begin position="1"/>
        <end position="549"/>
    </location>
</feature>
<feature type="active site" description="Proton donor" evidence="1">
    <location>
        <position position="353"/>
    </location>
</feature>
<feature type="active site" evidence="1">
    <location>
        <position position="384"/>
    </location>
</feature>
<feature type="active site" evidence="1">
    <location>
        <position position="510"/>
    </location>
</feature>